<comment type="function">
    <text evidence="1">Converts guanine to guanosine monophosphate, and hypoxanthine to inosine monophosphate. Transfers the 5-phosphoribosyl group from 5-phosphoribosylpyrophosphate onto the purine. Plays a central role in the generation of purine nucleotides through the purine salvage pathway (By similarity).</text>
</comment>
<comment type="catalytic activity">
    <reaction evidence="2">
        <text>IMP + diphosphate = hypoxanthine + 5-phospho-alpha-D-ribose 1-diphosphate</text>
        <dbReference type="Rhea" id="RHEA:17973"/>
        <dbReference type="ChEBI" id="CHEBI:17368"/>
        <dbReference type="ChEBI" id="CHEBI:33019"/>
        <dbReference type="ChEBI" id="CHEBI:58017"/>
        <dbReference type="ChEBI" id="CHEBI:58053"/>
        <dbReference type="EC" id="2.4.2.8"/>
    </reaction>
    <physiologicalReaction direction="right-to-left" evidence="2">
        <dbReference type="Rhea" id="RHEA:17975"/>
    </physiologicalReaction>
</comment>
<comment type="catalytic activity">
    <reaction evidence="2">
        <text>GMP + diphosphate = guanine + 5-phospho-alpha-D-ribose 1-diphosphate</text>
        <dbReference type="Rhea" id="RHEA:25424"/>
        <dbReference type="ChEBI" id="CHEBI:16235"/>
        <dbReference type="ChEBI" id="CHEBI:33019"/>
        <dbReference type="ChEBI" id="CHEBI:58017"/>
        <dbReference type="ChEBI" id="CHEBI:58115"/>
        <dbReference type="EC" id="2.4.2.8"/>
    </reaction>
    <physiologicalReaction direction="right-to-left" evidence="2">
        <dbReference type="Rhea" id="RHEA:25426"/>
    </physiologicalReaction>
</comment>
<comment type="cofactor">
    <cofactor evidence="1">
        <name>Mg(2+)</name>
        <dbReference type="ChEBI" id="CHEBI:18420"/>
    </cofactor>
    <text evidence="1">Binds 2 magnesium ions per subunit. The magnesium ions are essentially bound to the substrate and have few direct interactions with the protein.</text>
</comment>
<comment type="pathway">
    <text>Purine metabolism; IMP biosynthesis via salvage pathway; IMP from hypoxanthine: step 1/1.</text>
</comment>
<comment type="subunit">
    <text evidence="1">Homotetramer.</text>
</comment>
<comment type="subcellular location">
    <subcellularLocation>
        <location evidence="1">Cytoplasm</location>
    </subcellularLocation>
</comment>
<comment type="similarity">
    <text evidence="5">Belongs to the purine/pyrimidine phosphoribosyltransferase family.</text>
</comment>
<gene>
    <name type="primary">HPRT1</name>
</gene>
<keyword id="KW-0007">Acetylation</keyword>
<keyword id="KW-0963">Cytoplasm</keyword>
<keyword id="KW-0328">Glycosyltransferase</keyword>
<keyword id="KW-1017">Isopeptide bond</keyword>
<keyword id="KW-0460">Magnesium</keyword>
<keyword id="KW-0479">Metal-binding</keyword>
<keyword id="KW-0547">Nucleotide-binding</keyword>
<keyword id="KW-0597">Phosphoprotein</keyword>
<keyword id="KW-0660">Purine salvage</keyword>
<keyword id="KW-1185">Reference proteome</keyword>
<keyword id="KW-0808">Transferase</keyword>
<keyword id="KW-0832">Ubl conjugation</keyword>
<dbReference type="EC" id="2.4.2.8" evidence="2"/>
<dbReference type="EMBL" id="BC103248">
    <property type="protein sequence ID" value="AAI03249.1"/>
    <property type="molecule type" value="mRNA"/>
</dbReference>
<dbReference type="RefSeq" id="NP_001029207.1">
    <property type="nucleotide sequence ID" value="NM_001034035.2"/>
</dbReference>
<dbReference type="SMR" id="Q3SZ18"/>
<dbReference type="FunCoup" id="Q3SZ18">
    <property type="interactions" value="1276"/>
</dbReference>
<dbReference type="STRING" id="9913.ENSBTAP00000019547"/>
<dbReference type="PaxDb" id="9913-ENSBTAP00000019547"/>
<dbReference type="PeptideAtlas" id="Q3SZ18"/>
<dbReference type="Ensembl" id="ENSBTAT00000111869.1">
    <property type="protein sequence ID" value="ENSBTAP00000088561.1"/>
    <property type="gene ID" value="ENSBTAG00000014685.7"/>
</dbReference>
<dbReference type="GeneID" id="281229"/>
<dbReference type="KEGG" id="bta:281229"/>
<dbReference type="CTD" id="3251"/>
<dbReference type="VEuPathDB" id="HostDB:ENSBTAG00000014685"/>
<dbReference type="eggNOG" id="KOG3367">
    <property type="taxonomic scope" value="Eukaryota"/>
</dbReference>
<dbReference type="GeneTree" id="ENSGT00940000155028"/>
<dbReference type="HOGENOM" id="CLU_073615_3_0_1"/>
<dbReference type="InParanoid" id="Q3SZ18"/>
<dbReference type="OMA" id="YQAYEIS"/>
<dbReference type="OrthoDB" id="9449045at2759"/>
<dbReference type="TreeFam" id="TF313367"/>
<dbReference type="Reactome" id="R-BTA-74217">
    <property type="pathway name" value="Purine salvage"/>
</dbReference>
<dbReference type="Reactome" id="R-BTA-9748787">
    <property type="pathway name" value="Azathioprine ADME"/>
</dbReference>
<dbReference type="UniPathway" id="UPA00591">
    <property type="reaction ID" value="UER00648"/>
</dbReference>
<dbReference type="Proteomes" id="UP000009136">
    <property type="component" value="Chromosome X"/>
</dbReference>
<dbReference type="Bgee" id="ENSBTAG00000014685">
    <property type="expression patterns" value="Expressed in caput epididymis and 103 other cell types or tissues"/>
</dbReference>
<dbReference type="GO" id="GO:0005737">
    <property type="term" value="C:cytoplasm"/>
    <property type="evidence" value="ECO:0000250"/>
    <property type="project" value="UniProtKB"/>
</dbReference>
<dbReference type="GO" id="GO:0005829">
    <property type="term" value="C:cytosol"/>
    <property type="evidence" value="ECO:0000318"/>
    <property type="project" value="GO_Central"/>
</dbReference>
<dbReference type="GO" id="GO:0052657">
    <property type="term" value="F:guanine phosphoribosyltransferase activity"/>
    <property type="evidence" value="ECO:0000250"/>
    <property type="project" value="UniProtKB"/>
</dbReference>
<dbReference type="GO" id="GO:0004422">
    <property type="term" value="F:hypoxanthine phosphoribosyltransferase activity"/>
    <property type="evidence" value="ECO:0000250"/>
    <property type="project" value="UniProtKB"/>
</dbReference>
<dbReference type="GO" id="GO:0042802">
    <property type="term" value="F:identical protein binding"/>
    <property type="evidence" value="ECO:0000250"/>
    <property type="project" value="UniProtKB"/>
</dbReference>
<dbReference type="GO" id="GO:0000287">
    <property type="term" value="F:magnesium ion binding"/>
    <property type="evidence" value="ECO:0000250"/>
    <property type="project" value="UniProtKB"/>
</dbReference>
<dbReference type="GO" id="GO:0000166">
    <property type="term" value="F:nucleotide binding"/>
    <property type="evidence" value="ECO:0007669"/>
    <property type="project" value="UniProtKB-KW"/>
</dbReference>
<dbReference type="GO" id="GO:0046038">
    <property type="term" value="P:GMP catabolic process"/>
    <property type="evidence" value="ECO:0000250"/>
    <property type="project" value="UniProtKB"/>
</dbReference>
<dbReference type="GO" id="GO:0032263">
    <property type="term" value="P:GMP salvage"/>
    <property type="evidence" value="ECO:0000318"/>
    <property type="project" value="GO_Central"/>
</dbReference>
<dbReference type="GO" id="GO:0006178">
    <property type="term" value="P:guanine salvage"/>
    <property type="evidence" value="ECO:0000250"/>
    <property type="project" value="UniProtKB"/>
</dbReference>
<dbReference type="GO" id="GO:0046100">
    <property type="term" value="P:hypoxanthine metabolic process"/>
    <property type="evidence" value="ECO:0000250"/>
    <property type="project" value="UniProtKB"/>
</dbReference>
<dbReference type="GO" id="GO:0043103">
    <property type="term" value="P:hypoxanthine salvage"/>
    <property type="evidence" value="ECO:0000250"/>
    <property type="project" value="UniProtKB"/>
</dbReference>
<dbReference type="GO" id="GO:0046040">
    <property type="term" value="P:IMP metabolic process"/>
    <property type="evidence" value="ECO:0000250"/>
    <property type="project" value="UniProtKB"/>
</dbReference>
<dbReference type="GO" id="GO:0032264">
    <property type="term" value="P:IMP salvage"/>
    <property type="evidence" value="ECO:0000318"/>
    <property type="project" value="GO_Central"/>
</dbReference>
<dbReference type="GO" id="GO:0045964">
    <property type="term" value="P:positive regulation of dopamine metabolic process"/>
    <property type="evidence" value="ECO:0000250"/>
    <property type="project" value="UniProtKB"/>
</dbReference>
<dbReference type="GO" id="GO:0006164">
    <property type="term" value="P:purine nucleotide biosynthetic process"/>
    <property type="evidence" value="ECO:0000250"/>
    <property type="project" value="UniProtKB"/>
</dbReference>
<dbReference type="GO" id="GO:0006166">
    <property type="term" value="P:purine ribonucleoside salvage"/>
    <property type="evidence" value="ECO:0000250"/>
    <property type="project" value="UniProtKB"/>
</dbReference>
<dbReference type="CDD" id="cd06223">
    <property type="entry name" value="PRTases_typeI"/>
    <property type="match status" value="1"/>
</dbReference>
<dbReference type="FunFam" id="3.40.50.2020:FF:000019">
    <property type="entry name" value="Hypoxanthine phosphoribosyltransferase"/>
    <property type="match status" value="1"/>
</dbReference>
<dbReference type="Gene3D" id="3.40.50.2020">
    <property type="match status" value="1"/>
</dbReference>
<dbReference type="InterPro" id="IPR050408">
    <property type="entry name" value="HGPRT"/>
</dbReference>
<dbReference type="InterPro" id="IPR005904">
    <property type="entry name" value="Hxn_phspho_trans"/>
</dbReference>
<dbReference type="InterPro" id="IPR000836">
    <property type="entry name" value="PRibTrfase_dom"/>
</dbReference>
<dbReference type="InterPro" id="IPR029057">
    <property type="entry name" value="PRTase-like"/>
</dbReference>
<dbReference type="NCBIfam" id="TIGR01203">
    <property type="entry name" value="HGPRTase"/>
    <property type="match status" value="1"/>
</dbReference>
<dbReference type="PANTHER" id="PTHR43340">
    <property type="entry name" value="HYPOXANTHINE-GUANINE PHOSPHORIBOSYLTRANSFERASE"/>
    <property type="match status" value="1"/>
</dbReference>
<dbReference type="PANTHER" id="PTHR43340:SF6">
    <property type="entry name" value="HYPOXANTHINE-GUANINE PHOSPHORIBOSYLTRANSFERASE"/>
    <property type="match status" value="1"/>
</dbReference>
<dbReference type="Pfam" id="PF00156">
    <property type="entry name" value="Pribosyltran"/>
    <property type="match status" value="1"/>
</dbReference>
<dbReference type="SUPFAM" id="SSF53271">
    <property type="entry name" value="PRTase-like"/>
    <property type="match status" value="1"/>
</dbReference>
<dbReference type="PROSITE" id="PS00103">
    <property type="entry name" value="PUR_PYR_PR_TRANSFER"/>
    <property type="match status" value="1"/>
</dbReference>
<feature type="initiator methionine" description="Removed" evidence="2">
    <location>
        <position position="1"/>
    </location>
</feature>
<feature type="chain" id="PRO_0000257812" description="Hypoxanthine-guanine phosphoribosyltransferase">
    <location>
        <begin position="2"/>
        <end position="218"/>
    </location>
</feature>
<feature type="active site" description="Proton acceptor" evidence="1">
    <location>
        <position position="138"/>
    </location>
</feature>
<feature type="binding site" evidence="1">
    <location>
        <position position="69"/>
    </location>
    <ligand>
        <name>GMP</name>
        <dbReference type="ChEBI" id="CHEBI:58115"/>
    </ligand>
</feature>
<feature type="binding site" evidence="1">
    <location>
        <begin position="134"/>
        <end position="142"/>
    </location>
    <ligand>
        <name>GMP</name>
        <dbReference type="ChEBI" id="CHEBI:58115"/>
    </ligand>
</feature>
<feature type="binding site" evidence="1">
    <location>
        <position position="166"/>
    </location>
    <ligand>
        <name>GMP</name>
        <dbReference type="ChEBI" id="CHEBI:58115"/>
    </ligand>
</feature>
<feature type="binding site" evidence="1">
    <location>
        <begin position="186"/>
        <end position="188"/>
    </location>
    <ligand>
        <name>GMP</name>
        <dbReference type="ChEBI" id="CHEBI:58115"/>
    </ligand>
</feature>
<feature type="binding site" evidence="1">
    <location>
        <position position="194"/>
    </location>
    <ligand>
        <name>GMP</name>
        <dbReference type="ChEBI" id="CHEBI:58115"/>
    </ligand>
</feature>
<feature type="binding site" evidence="1">
    <location>
        <position position="194"/>
    </location>
    <ligand>
        <name>Mg(2+)</name>
        <dbReference type="ChEBI" id="CHEBI:18420"/>
    </ligand>
</feature>
<feature type="modified residue" description="N-acetylalanine" evidence="2">
    <location>
        <position position="2"/>
    </location>
</feature>
<feature type="modified residue" description="N6-acetyllysine" evidence="3">
    <location>
        <position position="103"/>
    </location>
</feature>
<feature type="modified residue" description="Phosphothreonine" evidence="4">
    <location>
        <position position="142"/>
    </location>
</feature>
<feature type="cross-link" description="Glycyl lysine isopeptide (Lys-Gly) (interchain with G-Cter in SUMO1); alternate" evidence="2">
    <location>
        <position position="115"/>
    </location>
</feature>
<feature type="cross-link" description="Glycyl lysine isopeptide (Lys-Gly) (interchain with G-Cter in SUMO2); alternate" evidence="2">
    <location>
        <position position="115"/>
    </location>
</feature>
<protein>
    <recommendedName>
        <fullName>Hypoxanthine-guanine phosphoribosyltransferase</fullName>
        <shortName>HGPRT</shortName>
        <shortName>HGPRTase</shortName>
        <ecNumber evidence="2">2.4.2.8</ecNumber>
    </recommendedName>
</protein>
<accession>Q3SZ18</accession>
<reference key="1">
    <citation type="submission" date="2005-08" db="EMBL/GenBank/DDBJ databases">
        <authorList>
            <consortium name="NIH - Mammalian Gene Collection (MGC) project"/>
        </authorList>
    </citation>
    <scope>NUCLEOTIDE SEQUENCE [LARGE SCALE MRNA]</scope>
    <source>
        <strain>Hereford</strain>
        <tissue>Fetal liver</tissue>
    </source>
</reference>
<sequence length="218" mass="24498">MAARSPSVVISDDEPGYDLNLFCIPNHYAEDLEKVFIPHGLIMDRTERLARDVMKEMGGHHIVALCVLKGGYKFFADLLDYIKALNRNSDKSIPMTVDFIRLKSYCNDQSTGDIKVIGGDDLSTLTGKNVLIVEDIIDTGKTMQTLLALVKKHKPKMVKVASLLMKRTPRSVGYKPDFVGFEIPDKFVVGYALDYNEYFRDLNHVCVISETGKAKYKA</sequence>
<proteinExistence type="evidence at transcript level"/>
<evidence type="ECO:0000250" key="1"/>
<evidence type="ECO:0000250" key="2">
    <source>
        <dbReference type="UniProtKB" id="P00492"/>
    </source>
</evidence>
<evidence type="ECO:0000250" key="3">
    <source>
        <dbReference type="UniProtKB" id="P00493"/>
    </source>
</evidence>
<evidence type="ECO:0000250" key="4">
    <source>
        <dbReference type="UniProtKB" id="P27605"/>
    </source>
</evidence>
<evidence type="ECO:0000305" key="5"/>
<name>HPRT_BOVIN</name>
<organism>
    <name type="scientific">Bos taurus</name>
    <name type="common">Bovine</name>
    <dbReference type="NCBI Taxonomy" id="9913"/>
    <lineage>
        <taxon>Eukaryota</taxon>
        <taxon>Metazoa</taxon>
        <taxon>Chordata</taxon>
        <taxon>Craniata</taxon>
        <taxon>Vertebrata</taxon>
        <taxon>Euteleostomi</taxon>
        <taxon>Mammalia</taxon>
        <taxon>Eutheria</taxon>
        <taxon>Laurasiatheria</taxon>
        <taxon>Artiodactyla</taxon>
        <taxon>Ruminantia</taxon>
        <taxon>Pecora</taxon>
        <taxon>Bovidae</taxon>
        <taxon>Bovinae</taxon>
        <taxon>Bos</taxon>
    </lineage>
</organism>